<reference key="1">
    <citation type="journal article" date="2007" name="PLoS ONE">
        <title>Complete genomic characterization of a pathogenic A.II strain of Francisella tularensis subspecies tularensis.</title>
        <authorList>
            <person name="Beckstrom-Sternberg S.M."/>
            <person name="Auerbach R.K."/>
            <person name="Godbole S."/>
            <person name="Pearson J.V."/>
            <person name="Beckstrom-Sternberg J.S."/>
            <person name="Deng Z."/>
            <person name="Munk C."/>
            <person name="Kubota K."/>
            <person name="Zhou Y."/>
            <person name="Bruce D."/>
            <person name="Noronha J."/>
            <person name="Scheuermann R.H."/>
            <person name="Wang A."/>
            <person name="Wei X."/>
            <person name="Wang J."/>
            <person name="Hao J."/>
            <person name="Wagner D.M."/>
            <person name="Brettin T.S."/>
            <person name="Brown N."/>
            <person name="Gilna P."/>
            <person name="Keim P.S."/>
        </authorList>
    </citation>
    <scope>NUCLEOTIDE SEQUENCE [LARGE SCALE GENOMIC DNA]</scope>
    <source>
        <strain>WY96-3418</strain>
    </source>
</reference>
<keyword id="KW-0687">Ribonucleoprotein</keyword>
<keyword id="KW-0689">Ribosomal protein</keyword>
<evidence type="ECO:0000255" key="1">
    <source>
        <dbReference type="HAMAP-Rule" id="MF_00251"/>
    </source>
</evidence>
<evidence type="ECO:0000305" key="2"/>
<proteinExistence type="inferred from homology"/>
<accession>A4IZR3</accession>
<organism>
    <name type="scientific">Francisella tularensis subsp. tularensis (strain WY96-3418)</name>
    <dbReference type="NCBI Taxonomy" id="418136"/>
    <lineage>
        <taxon>Bacteria</taxon>
        <taxon>Pseudomonadati</taxon>
        <taxon>Pseudomonadota</taxon>
        <taxon>Gammaproteobacteria</taxon>
        <taxon>Thiotrichales</taxon>
        <taxon>Francisellaceae</taxon>
        <taxon>Francisella</taxon>
    </lineage>
</organism>
<dbReference type="EMBL" id="CP000608">
    <property type="protein sequence ID" value="ABO47413.1"/>
    <property type="molecule type" value="Genomic_DNA"/>
</dbReference>
<dbReference type="RefSeq" id="WP_003017816.1">
    <property type="nucleotide sequence ID" value="NC_009257.1"/>
</dbReference>
<dbReference type="SMR" id="A4IZR3"/>
<dbReference type="GeneID" id="93254575"/>
<dbReference type="KEGG" id="ftw:FTW_1737"/>
<dbReference type="HOGENOM" id="CLU_135723_6_2_6"/>
<dbReference type="GO" id="GO:0005737">
    <property type="term" value="C:cytoplasm"/>
    <property type="evidence" value="ECO:0007669"/>
    <property type="project" value="UniProtKB-ARBA"/>
</dbReference>
<dbReference type="GO" id="GO:1990904">
    <property type="term" value="C:ribonucleoprotein complex"/>
    <property type="evidence" value="ECO:0007669"/>
    <property type="project" value="UniProtKB-KW"/>
</dbReference>
<dbReference type="GO" id="GO:0005840">
    <property type="term" value="C:ribosome"/>
    <property type="evidence" value="ECO:0007669"/>
    <property type="project" value="UniProtKB-KW"/>
</dbReference>
<dbReference type="GO" id="GO:0003735">
    <property type="term" value="F:structural constituent of ribosome"/>
    <property type="evidence" value="ECO:0007669"/>
    <property type="project" value="InterPro"/>
</dbReference>
<dbReference type="GO" id="GO:0006412">
    <property type="term" value="P:translation"/>
    <property type="evidence" value="ECO:0007669"/>
    <property type="project" value="UniProtKB-UniRule"/>
</dbReference>
<dbReference type="HAMAP" id="MF_00251">
    <property type="entry name" value="Ribosomal_bL36"/>
    <property type="match status" value="1"/>
</dbReference>
<dbReference type="InterPro" id="IPR000473">
    <property type="entry name" value="Ribosomal_bL36"/>
</dbReference>
<dbReference type="InterPro" id="IPR035977">
    <property type="entry name" value="Ribosomal_bL36_sp"/>
</dbReference>
<dbReference type="NCBIfam" id="TIGR01022">
    <property type="entry name" value="rpmJ_bact"/>
    <property type="match status" value="1"/>
</dbReference>
<dbReference type="PANTHER" id="PTHR42888">
    <property type="entry name" value="50S RIBOSOMAL PROTEIN L36, CHLOROPLASTIC"/>
    <property type="match status" value="1"/>
</dbReference>
<dbReference type="PANTHER" id="PTHR42888:SF1">
    <property type="entry name" value="LARGE RIBOSOMAL SUBUNIT PROTEIN BL36C"/>
    <property type="match status" value="1"/>
</dbReference>
<dbReference type="Pfam" id="PF00444">
    <property type="entry name" value="Ribosomal_L36"/>
    <property type="match status" value="1"/>
</dbReference>
<dbReference type="SUPFAM" id="SSF57840">
    <property type="entry name" value="Ribosomal protein L36"/>
    <property type="match status" value="1"/>
</dbReference>
<dbReference type="PROSITE" id="PS00828">
    <property type="entry name" value="RIBOSOMAL_L36"/>
    <property type="match status" value="1"/>
</dbReference>
<sequence>MKVRASVKKMCRNCKVIKRNRVVRVICTDPRHKQRQG</sequence>
<name>RL36_FRATW</name>
<protein>
    <recommendedName>
        <fullName evidence="1">Large ribosomal subunit protein bL36</fullName>
    </recommendedName>
    <alternativeName>
        <fullName evidence="2">50S ribosomal protein L36</fullName>
    </alternativeName>
</protein>
<gene>
    <name evidence="1" type="primary">rpmJ</name>
    <name type="ordered locus">FTW_1737</name>
</gene>
<comment type="similarity">
    <text evidence="1">Belongs to the bacterial ribosomal protein bL36 family.</text>
</comment>
<feature type="chain" id="PRO_0000302207" description="Large ribosomal subunit protein bL36">
    <location>
        <begin position="1"/>
        <end position="37"/>
    </location>
</feature>